<evidence type="ECO:0000255" key="1">
    <source>
        <dbReference type="HAMAP-Rule" id="MF_01825"/>
    </source>
</evidence>
<feature type="chain" id="PRO_1000216068" description="Erythronate-4-phosphate dehydrogenase">
    <location>
        <begin position="1"/>
        <end position="380"/>
    </location>
</feature>
<feature type="active site" evidence="1">
    <location>
        <position position="207"/>
    </location>
</feature>
<feature type="active site" evidence="1">
    <location>
        <position position="236"/>
    </location>
</feature>
<feature type="active site" description="Proton donor" evidence="1">
    <location>
        <position position="253"/>
    </location>
</feature>
<feature type="binding site" evidence="1">
    <location>
        <position position="45"/>
    </location>
    <ligand>
        <name>substrate</name>
    </ligand>
</feature>
<feature type="binding site" evidence="1">
    <location>
        <position position="66"/>
    </location>
    <ligand>
        <name>substrate</name>
    </ligand>
</feature>
<feature type="binding site" evidence="1">
    <location>
        <begin position="126"/>
        <end position="127"/>
    </location>
    <ligand>
        <name>NAD(+)</name>
        <dbReference type="ChEBI" id="CHEBI:57540"/>
    </ligand>
</feature>
<feature type="binding site" evidence="1">
    <location>
        <position position="146"/>
    </location>
    <ligand>
        <name>NAD(+)</name>
        <dbReference type="ChEBI" id="CHEBI:57540"/>
    </ligand>
</feature>
<feature type="binding site" evidence="1">
    <location>
        <position position="174"/>
    </location>
    <ligand>
        <name>NAD(+)</name>
        <dbReference type="ChEBI" id="CHEBI:57540"/>
    </ligand>
</feature>
<feature type="binding site" evidence="1">
    <location>
        <begin position="205"/>
        <end position="207"/>
    </location>
    <ligand>
        <name>NAD(+)</name>
        <dbReference type="ChEBI" id="CHEBI:57540"/>
    </ligand>
</feature>
<feature type="binding site" evidence="1">
    <location>
        <position position="231"/>
    </location>
    <ligand>
        <name>NAD(+)</name>
        <dbReference type="ChEBI" id="CHEBI:57540"/>
    </ligand>
</feature>
<feature type="binding site" evidence="1">
    <location>
        <position position="256"/>
    </location>
    <ligand>
        <name>NAD(+)</name>
        <dbReference type="ChEBI" id="CHEBI:57540"/>
    </ligand>
</feature>
<feature type="binding site" evidence="1">
    <location>
        <position position="257"/>
    </location>
    <ligand>
        <name>substrate</name>
    </ligand>
</feature>
<organism>
    <name type="scientific">Azotobacter vinelandii (strain DJ / ATCC BAA-1303)</name>
    <dbReference type="NCBI Taxonomy" id="322710"/>
    <lineage>
        <taxon>Bacteria</taxon>
        <taxon>Pseudomonadati</taxon>
        <taxon>Pseudomonadota</taxon>
        <taxon>Gammaproteobacteria</taxon>
        <taxon>Pseudomonadales</taxon>
        <taxon>Pseudomonadaceae</taxon>
        <taxon>Azotobacter</taxon>
    </lineage>
</organism>
<gene>
    <name evidence="1" type="primary">pdxB</name>
    <name type="ordered locus">Avin_29870</name>
</gene>
<accession>C1DM66</accession>
<proteinExistence type="inferred from homology"/>
<sequence length="380" mass="41469">MRILADENIPLVHAFFSAFGEIRQLPGRAIVSGSLGDADVLLVRSVTRVDAALLEGSRVRFVGTCTIGTDHLDLDYLRRRGIAWASAPGCNARGVVDYVLGSLLSLAERQGVDLASRCYGVVGAGQVGGRLVEVLRGLGWRVLVCDPPRQALERGDFVDLPTLLRECDVLSVHTPLTHEGAHPTRHLFGREQLARLRPGTWLINASRGAVVDNRALREALAGRTDLQAVLDVWEGEPLVDVALAGLCHIATPHIAGYSLDGKLRGTAQVYRAFCEQQGVPPGVLLDELLPPPWLGELGLDGRADPAWALATLCRAVYDPRRDDADFRRSLEGDEQARRSAFDALRKHYPPRREIDGLRVRLSGEAPRLRQLVRALGAEPV</sequence>
<comment type="function">
    <text evidence="1">Catalyzes the oxidation of erythronate-4-phosphate to 3-hydroxy-2-oxo-4-phosphonooxybutanoate.</text>
</comment>
<comment type="catalytic activity">
    <reaction evidence="1">
        <text>4-phospho-D-erythronate + NAD(+) = (R)-3-hydroxy-2-oxo-4-phosphooxybutanoate + NADH + H(+)</text>
        <dbReference type="Rhea" id="RHEA:18829"/>
        <dbReference type="ChEBI" id="CHEBI:15378"/>
        <dbReference type="ChEBI" id="CHEBI:57540"/>
        <dbReference type="ChEBI" id="CHEBI:57945"/>
        <dbReference type="ChEBI" id="CHEBI:58538"/>
        <dbReference type="ChEBI" id="CHEBI:58766"/>
        <dbReference type="EC" id="1.1.1.290"/>
    </reaction>
</comment>
<comment type="pathway">
    <text evidence="1">Cofactor biosynthesis; pyridoxine 5'-phosphate biosynthesis; pyridoxine 5'-phosphate from D-erythrose 4-phosphate: step 2/5.</text>
</comment>
<comment type="subunit">
    <text evidence="1">Homodimer.</text>
</comment>
<comment type="subcellular location">
    <subcellularLocation>
        <location evidence="1">Cytoplasm</location>
    </subcellularLocation>
</comment>
<comment type="similarity">
    <text evidence="1">Belongs to the D-isomer specific 2-hydroxyacid dehydrogenase family. PdxB subfamily.</text>
</comment>
<dbReference type="EC" id="1.1.1.290" evidence="1"/>
<dbReference type="EMBL" id="CP001157">
    <property type="protein sequence ID" value="ACO79153.1"/>
    <property type="molecule type" value="Genomic_DNA"/>
</dbReference>
<dbReference type="RefSeq" id="WP_012701540.1">
    <property type="nucleotide sequence ID" value="NC_012560.1"/>
</dbReference>
<dbReference type="SMR" id="C1DM66"/>
<dbReference type="STRING" id="322710.Avin_29870"/>
<dbReference type="EnsemblBacteria" id="ACO79153">
    <property type="protein sequence ID" value="ACO79153"/>
    <property type="gene ID" value="Avin_29870"/>
</dbReference>
<dbReference type="GeneID" id="88186084"/>
<dbReference type="KEGG" id="avn:Avin_29870"/>
<dbReference type="eggNOG" id="COG0111">
    <property type="taxonomic scope" value="Bacteria"/>
</dbReference>
<dbReference type="HOGENOM" id="CLU_019796_4_0_6"/>
<dbReference type="OrthoDB" id="9770208at2"/>
<dbReference type="UniPathway" id="UPA00244">
    <property type="reaction ID" value="UER00310"/>
</dbReference>
<dbReference type="Proteomes" id="UP000002424">
    <property type="component" value="Chromosome"/>
</dbReference>
<dbReference type="GO" id="GO:0005829">
    <property type="term" value="C:cytosol"/>
    <property type="evidence" value="ECO:0007669"/>
    <property type="project" value="TreeGrafter"/>
</dbReference>
<dbReference type="GO" id="GO:0033711">
    <property type="term" value="F:4-phosphoerythronate dehydrogenase activity"/>
    <property type="evidence" value="ECO:0007669"/>
    <property type="project" value="UniProtKB-EC"/>
</dbReference>
<dbReference type="GO" id="GO:0051287">
    <property type="term" value="F:NAD binding"/>
    <property type="evidence" value="ECO:0007669"/>
    <property type="project" value="InterPro"/>
</dbReference>
<dbReference type="GO" id="GO:0046983">
    <property type="term" value="F:protein dimerization activity"/>
    <property type="evidence" value="ECO:0007669"/>
    <property type="project" value="InterPro"/>
</dbReference>
<dbReference type="GO" id="GO:0036001">
    <property type="term" value="P:'de novo' pyridoxal 5'-phosphate biosynthetic process"/>
    <property type="evidence" value="ECO:0007669"/>
    <property type="project" value="TreeGrafter"/>
</dbReference>
<dbReference type="GO" id="GO:0008615">
    <property type="term" value="P:pyridoxine biosynthetic process"/>
    <property type="evidence" value="ECO:0007669"/>
    <property type="project" value="UniProtKB-UniRule"/>
</dbReference>
<dbReference type="CDD" id="cd12158">
    <property type="entry name" value="ErythrP_dh"/>
    <property type="match status" value="1"/>
</dbReference>
<dbReference type="Gene3D" id="3.30.1370.170">
    <property type="match status" value="1"/>
</dbReference>
<dbReference type="Gene3D" id="3.40.50.720">
    <property type="entry name" value="NAD(P)-binding Rossmann-like Domain"/>
    <property type="match status" value="2"/>
</dbReference>
<dbReference type="HAMAP" id="MF_01825">
    <property type="entry name" value="PdxB"/>
    <property type="match status" value="1"/>
</dbReference>
<dbReference type="InterPro" id="IPR006139">
    <property type="entry name" value="D-isomer_2_OHA_DH_cat_dom"/>
</dbReference>
<dbReference type="InterPro" id="IPR029753">
    <property type="entry name" value="D-isomer_DH_CS"/>
</dbReference>
<dbReference type="InterPro" id="IPR006140">
    <property type="entry name" value="D-isomer_DH_NAD-bd"/>
</dbReference>
<dbReference type="InterPro" id="IPR020921">
    <property type="entry name" value="Erythronate-4-P_DHase"/>
</dbReference>
<dbReference type="InterPro" id="IPR024531">
    <property type="entry name" value="Erythronate-4-P_DHase_dimer"/>
</dbReference>
<dbReference type="InterPro" id="IPR036291">
    <property type="entry name" value="NAD(P)-bd_dom_sf"/>
</dbReference>
<dbReference type="InterPro" id="IPR038251">
    <property type="entry name" value="PdxB_dimer_sf"/>
</dbReference>
<dbReference type="NCBIfam" id="NF001309">
    <property type="entry name" value="PRK00257.1"/>
    <property type="match status" value="1"/>
</dbReference>
<dbReference type="PANTHER" id="PTHR42938">
    <property type="entry name" value="FORMATE DEHYDROGENASE 1"/>
    <property type="match status" value="1"/>
</dbReference>
<dbReference type="PANTHER" id="PTHR42938:SF9">
    <property type="entry name" value="FORMATE DEHYDROGENASE 1"/>
    <property type="match status" value="1"/>
</dbReference>
<dbReference type="Pfam" id="PF00389">
    <property type="entry name" value="2-Hacid_dh"/>
    <property type="match status" value="1"/>
</dbReference>
<dbReference type="Pfam" id="PF02826">
    <property type="entry name" value="2-Hacid_dh_C"/>
    <property type="match status" value="1"/>
</dbReference>
<dbReference type="Pfam" id="PF11890">
    <property type="entry name" value="DUF3410"/>
    <property type="match status" value="1"/>
</dbReference>
<dbReference type="SUPFAM" id="SSF52283">
    <property type="entry name" value="Formate/glycerate dehydrogenase catalytic domain-like"/>
    <property type="match status" value="1"/>
</dbReference>
<dbReference type="SUPFAM" id="SSF51735">
    <property type="entry name" value="NAD(P)-binding Rossmann-fold domains"/>
    <property type="match status" value="1"/>
</dbReference>
<dbReference type="PROSITE" id="PS00671">
    <property type="entry name" value="D_2_HYDROXYACID_DH_3"/>
    <property type="match status" value="1"/>
</dbReference>
<reference key="1">
    <citation type="journal article" date="2009" name="J. Bacteriol.">
        <title>Genome sequence of Azotobacter vinelandii, an obligate aerobe specialized to support diverse anaerobic metabolic processes.</title>
        <authorList>
            <person name="Setubal J.C."/>
            <person name="Dos Santos P."/>
            <person name="Goldman B.S."/>
            <person name="Ertesvaag H."/>
            <person name="Espin G."/>
            <person name="Rubio L.M."/>
            <person name="Valla S."/>
            <person name="Almeida N.F."/>
            <person name="Balasubramanian D."/>
            <person name="Cromes L."/>
            <person name="Curatti L."/>
            <person name="Du Z."/>
            <person name="Godsy E."/>
            <person name="Goodner B."/>
            <person name="Hellner-Burris K."/>
            <person name="Hernandez J.A."/>
            <person name="Houmiel K."/>
            <person name="Imperial J."/>
            <person name="Kennedy C."/>
            <person name="Larson T.J."/>
            <person name="Latreille P."/>
            <person name="Ligon L.S."/>
            <person name="Lu J."/>
            <person name="Maerk M."/>
            <person name="Miller N.M."/>
            <person name="Norton S."/>
            <person name="O'Carroll I.P."/>
            <person name="Paulsen I."/>
            <person name="Raulfs E.C."/>
            <person name="Roemer R."/>
            <person name="Rosser J."/>
            <person name="Segura D."/>
            <person name="Slater S."/>
            <person name="Stricklin S.L."/>
            <person name="Studholme D.J."/>
            <person name="Sun J."/>
            <person name="Viana C.J."/>
            <person name="Wallin E."/>
            <person name="Wang B."/>
            <person name="Wheeler C."/>
            <person name="Zhu H."/>
            <person name="Dean D.R."/>
            <person name="Dixon R."/>
            <person name="Wood D."/>
        </authorList>
    </citation>
    <scope>NUCLEOTIDE SEQUENCE [LARGE SCALE GENOMIC DNA]</scope>
    <source>
        <strain>DJ / ATCC BAA-1303</strain>
    </source>
</reference>
<protein>
    <recommendedName>
        <fullName evidence="1">Erythronate-4-phosphate dehydrogenase</fullName>
        <ecNumber evidence="1">1.1.1.290</ecNumber>
    </recommendedName>
</protein>
<name>PDXB_AZOVD</name>
<keyword id="KW-0963">Cytoplasm</keyword>
<keyword id="KW-0520">NAD</keyword>
<keyword id="KW-0560">Oxidoreductase</keyword>
<keyword id="KW-0664">Pyridoxine biosynthesis</keyword>